<protein>
    <recommendedName>
        <fullName evidence="1">Translation initiation factor IF-1</fullName>
    </recommendedName>
</protein>
<evidence type="ECO:0000255" key="1">
    <source>
        <dbReference type="HAMAP-Rule" id="MF_00075"/>
    </source>
</evidence>
<sequence>MAKEDNIEMQGTILETLPNTMFRVELENGHVVIAHISGKMRKNYIRILTGDKVTVQLTPYDLTKGRIVFRAR</sequence>
<gene>
    <name evidence="1" type="primary">infA</name>
    <name type="ordered locus">SO_2625</name>
</gene>
<reference key="1">
    <citation type="journal article" date="2002" name="Nat. Biotechnol.">
        <title>Genome sequence of the dissimilatory metal ion-reducing bacterium Shewanella oneidensis.</title>
        <authorList>
            <person name="Heidelberg J.F."/>
            <person name="Paulsen I.T."/>
            <person name="Nelson K.E."/>
            <person name="Gaidos E.J."/>
            <person name="Nelson W.C."/>
            <person name="Read T.D."/>
            <person name="Eisen J.A."/>
            <person name="Seshadri R."/>
            <person name="Ward N.L."/>
            <person name="Methe B.A."/>
            <person name="Clayton R.A."/>
            <person name="Meyer T."/>
            <person name="Tsapin A."/>
            <person name="Scott J."/>
            <person name="Beanan M.J."/>
            <person name="Brinkac L.M."/>
            <person name="Daugherty S.C."/>
            <person name="DeBoy R.T."/>
            <person name="Dodson R.J."/>
            <person name="Durkin A.S."/>
            <person name="Haft D.H."/>
            <person name="Kolonay J.F."/>
            <person name="Madupu R."/>
            <person name="Peterson J.D."/>
            <person name="Umayam L.A."/>
            <person name="White O."/>
            <person name="Wolf A.M."/>
            <person name="Vamathevan J.J."/>
            <person name="Weidman J.F."/>
            <person name="Impraim M."/>
            <person name="Lee K."/>
            <person name="Berry K.J."/>
            <person name="Lee C."/>
            <person name="Mueller J."/>
            <person name="Khouri H.M."/>
            <person name="Gill J."/>
            <person name="Utterback T.R."/>
            <person name="McDonald L.A."/>
            <person name="Feldblyum T.V."/>
            <person name="Smith H.O."/>
            <person name="Venter J.C."/>
            <person name="Nealson K.H."/>
            <person name="Fraser C.M."/>
        </authorList>
    </citation>
    <scope>NUCLEOTIDE SEQUENCE [LARGE SCALE GENOMIC DNA]</scope>
    <source>
        <strain>ATCC 700550 / JCM 31522 / CIP 106686 / LMG 19005 / NCIMB 14063 / MR-1</strain>
    </source>
</reference>
<dbReference type="EMBL" id="AE014299">
    <property type="protein sequence ID" value="AAN55654.1"/>
    <property type="molecule type" value="Genomic_DNA"/>
</dbReference>
<dbReference type="RefSeq" id="NP_718210.1">
    <property type="nucleotide sequence ID" value="NC_004347.2"/>
</dbReference>
<dbReference type="RefSeq" id="WP_006081934.1">
    <property type="nucleotide sequence ID" value="NZ_CP053946.1"/>
</dbReference>
<dbReference type="SMR" id="Q8EDW6"/>
<dbReference type="STRING" id="211586.SO_2625"/>
<dbReference type="PaxDb" id="211586-SO_2625"/>
<dbReference type="GeneID" id="94727745"/>
<dbReference type="KEGG" id="son:SO_2625"/>
<dbReference type="PATRIC" id="fig|211586.12.peg.2528"/>
<dbReference type="eggNOG" id="COG0361">
    <property type="taxonomic scope" value="Bacteria"/>
</dbReference>
<dbReference type="HOGENOM" id="CLU_151267_1_0_6"/>
<dbReference type="OrthoDB" id="9803250at2"/>
<dbReference type="PhylomeDB" id="Q8EDW6"/>
<dbReference type="BioCyc" id="SONE211586:G1GMP-2411-MONOMER"/>
<dbReference type="PRO" id="PR:Q8EDW6"/>
<dbReference type="Proteomes" id="UP000008186">
    <property type="component" value="Chromosome"/>
</dbReference>
<dbReference type="GO" id="GO:0005829">
    <property type="term" value="C:cytosol"/>
    <property type="evidence" value="ECO:0000318"/>
    <property type="project" value="GO_Central"/>
</dbReference>
<dbReference type="GO" id="GO:0043022">
    <property type="term" value="F:ribosome binding"/>
    <property type="evidence" value="ECO:0000318"/>
    <property type="project" value="GO_Central"/>
</dbReference>
<dbReference type="GO" id="GO:0019843">
    <property type="term" value="F:rRNA binding"/>
    <property type="evidence" value="ECO:0007669"/>
    <property type="project" value="UniProtKB-UniRule"/>
</dbReference>
<dbReference type="GO" id="GO:0003743">
    <property type="term" value="F:translation initiation factor activity"/>
    <property type="evidence" value="ECO:0007669"/>
    <property type="project" value="UniProtKB-UniRule"/>
</dbReference>
<dbReference type="CDD" id="cd04451">
    <property type="entry name" value="S1_IF1"/>
    <property type="match status" value="1"/>
</dbReference>
<dbReference type="FunFam" id="2.40.50.140:FF:000002">
    <property type="entry name" value="Translation initiation factor IF-1"/>
    <property type="match status" value="1"/>
</dbReference>
<dbReference type="Gene3D" id="2.40.50.140">
    <property type="entry name" value="Nucleic acid-binding proteins"/>
    <property type="match status" value="1"/>
</dbReference>
<dbReference type="HAMAP" id="MF_00075">
    <property type="entry name" value="IF_1"/>
    <property type="match status" value="1"/>
</dbReference>
<dbReference type="InterPro" id="IPR012340">
    <property type="entry name" value="NA-bd_OB-fold"/>
</dbReference>
<dbReference type="InterPro" id="IPR006196">
    <property type="entry name" value="RNA-binding_domain_S1_IF1"/>
</dbReference>
<dbReference type="InterPro" id="IPR003029">
    <property type="entry name" value="S1_domain"/>
</dbReference>
<dbReference type="InterPro" id="IPR004368">
    <property type="entry name" value="TIF_IF1"/>
</dbReference>
<dbReference type="NCBIfam" id="TIGR00008">
    <property type="entry name" value="infA"/>
    <property type="match status" value="1"/>
</dbReference>
<dbReference type="PANTHER" id="PTHR33370">
    <property type="entry name" value="TRANSLATION INITIATION FACTOR IF-1, CHLOROPLASTIC"/>
    <property type="match status" value="1"/>
</dbReference>
<dbReference type="PANTHER" id="PTHR33370:SF1">
    <property type="entry name" value="TRANSLATION INITIATION FACTOR IF-1, CHLOROPLASTIC"/>
    <property type="match status" value="1"/>
</dbReference>
<dbReference type="Pfam" id="PF01176">
    <property type="entry name" value="eIF-1a"/>
    <property type="match status" value="1"/>
</dbReference>
<dbReference type="SMART" id="SM00316">
    <property type="entry name" value="S1"/>
    <property type="match status" value="1"/>
</dbReference>
<dbReference type="SUPFAM" id="SSF50249">
    <property type="entry name" value="Nucleic acid-binding proteins"/>
    <property type="match status" value="1"/>
</dbReference>
<dbReference type="PROSITE" id="PS50832">
    <property type="entry name" value="S1_IF1_TYPE"/>
    <property type="match status" value="1"/>
</dbReference>
<name>IF1_SHEON</name>
<comment type="function">
    <text evidence="1">One of the essential components for the initiation of protein synthesis. Stabilizes the binding of IF-2 and IF-3 on the 30S subunit to which N-formylmethionyl-tRNA(fMet) subsequently binds. Helps modulate mRNA selection, yielding the 30S pre-initiation complex (PIC). Upon addition of the 50S ribosomal subunit IF-1, IF-2 and IF-3 are released leaving the mature 70S translation initiation complex.</text>
</comment>
<comment type="subunit">
    <text evidence="1">Component of the 30S ribosomal translation pre-initiation complex which assembles on the 30S ribosome in the order IF-2 and IF-3, IF-1 and N-formylmethionyl-tRNA(fMet); mRNA recruitment can occur at any time during PIC assembly.</text>
</comment>
<comment type="subcellular location">
    <subcellularLocation>
        <location evidence="1">Cytoplasm</location>
    </subcellularLocation>
</comment>
<comment type="similarity">
    <text evidence="1">Belongs to the IF-1 family.</text>
</comment>
<feature type="chain" id="PRO_0000095861" description="Translation initiation factor IF-1">
    <location>
        <begin position="1"/>
        <end position="72"/>
    </location>
</feature>
<feature type="domain" description="S1-like" evidence="1">
    <location>
        <begin position="1"/>
        <end position="72"/>
    </location>
</feature>
<proteinExistence type="inferred from homology"/>
<organism>
    <name type="scientific">Shewanella oneidensis (strain ATCC 700550 / JCM 31522 / CIP 106686 / LMG 19005 / NCIMB 14063 / MR-1)</name>
    <dbReference type="NCBI Taxonomy" id="211586"/>
    <lineage>
        <taxon>Bacteria</taxon>
        <taxon>Pseudomonadati</taxon>
        <taxon>Pseudomonadota</taxon>
        <taxon>Gammaproteobacteria</taxon>
        <taxon>Alteromonadales</taxon>
        <taxon>Shewanellaceae</taxon>
        <taxon>Shewanella</taxon>
    </lineage>
</organism>
<accession>Q8EDW6</accession>
<keyword id="KW-0963">Cytoplasm</keyword>
<keyword id="KW-0396">Initiation factor</keyword>
<keyword id="KW-0648">Protein biosynthesis</keyword>
<keyword id="KW-1185">Reference proteome</keyword>
<keyword id="KW-0694">RNA-binding</keyword>
<keyword id="KW-0699">rRNA-binding</keyword>